<feature type="chain" id="PRO_0000066266" description="Alpha-D-glucose-1-phosphate phosphatase YihX">
    <location>
        <begin position="1"/>
        <end position="199"/>
    </location>
</feature>
<feature type="active site" description="Nucleophile" evidence="3">
    <location>
        <position position="6"/>
    </location>
</feature>
<feature type="binding site" evidence="1">
    <location>
        <begin position="6"/>
        <end position="8"/>
    </location>
    <ligand>
        <name>substrate</name>
    </ligand>
</feature>
<feature type="binding site" evidence="1">
    <location>
        <position position="6"/>
    </location>
    <ligand>
        <name>Mg(2+)</name>
        <dbReference type="ChEBI" id="CHEBI:18420"/>
    </ligand>
</feature>
<feature type="binding site" evidence="1">
    <location>
        <begin position="107"/>
        <end position="108"/>
    </location>
    <ligand>
        <name>substrate</name>
    </ligand>
</feature>
<feature type="binding site" evidence="1">
    <location>
        <position position="141"/>
    </location>
    <ligand>
        <name>substrate</name>
    </ligand>
</feature>
<feature type="binding site" evidence="1">
    <location>
        <position position="166"/>
    </location>
    <ligand>
        <name>Mg(2+)</name>
        <dbReference type="ChEBI" id="CHEBI:18420"/>
    </ligand>
</feature>
<feature type="binding site" evidence="1">
    <location>
        <position position="166"/>
    </location>
    <ligand>
        <name>substrate</name>
    </ligand>
</feature>
<reference key="1">
    <citation type="journal article" date="2002" name="Nucleic Acids Res.">
        <title>Genome sequence of Shigella flexneri 2a: insights into pathogenicity through comparison with genomes of Escherichia coli K12 and O157.</title>
        <authorList>
            <person name="Jin Q."/>
            <person name="Yuan Z."/>
            <person name="Xu J."/>
            <person name="Wang Y."/>
            <person name="Shen Y."/>
            <person name="Lu W."/>
            <person name="Wang J."/>
            <person name="Liu H."/>
            <person name="Yang J."/>
            <person name="Yang F."/>
            <person name="Zhang X."/>
            <person name="Zhang J."/>
            <person name="Yang G."/>
            <person name="Wu H."/>
            <person name="Qu D."/>
            <person name="Dong J."/>
            <person name="Sun L."/>
            <person name="Xue Y."/>
            <person name="Zhao A."/>
            <person name="Gao Y."/>
            <person name="Zhu J."/>
            <person name="Kan B."/>
            <person name="Ding K."/>
            <person name="Chen S."/>
            <person name="Cheng H."/>
            <person name="Yao Z."/>
            <person name="He B."/>
            <person name="Chen R."/>
            <person name="Ma D."/>
            <person name="Qiang B."/>
            <person name="Wen Y."/>
            <person name="Hou Y."/>
            <person name="Yu J."/>
        </authorList>
    </citation>
    <scope>NUCLEOTIDE SEQUENCE [LARGE SCALE GENOMIC DNA]</scope>
    <source>
        <strain>301 / Serotype 2a</strain>
    </source>
</reference>
<reference key="2">
    <citation type="journal article" date="2003" name="Infect. Immun.">
        <title>Complete genome sequence and comparative genomics of Shigella flexneri serotype 2a strain 2457T.</title>
        <authorList>
            <person name="Wei J."/>
            <person name="Goldberg M.B."/>
            <person name="Burland V."/>
            <person name="Venkatesan M.M."/>
            <person name="Deng W."/>
            <person name="Fournier G."/>
            <person name="Mayhew G.F."/>
            <person name="Plunkett G. III"/>
            <person name="Rose D.J."/>
            <person name="Darling A."/>
            <person name="Mau B."/>
            <person name="Perna N.T."/>
            <person name="Payne S.M."/>
            <person name="Runyen-Janecky L.J."/>
            <person name="Zhou S."/>
            <person name="Schwartz D.C."/>
            <person name="Blattner F.R."/>
        </authorList>
    </citation>
    <scope>NUCLEOTIDE SEQUENCE [LARGE SCALE GENOMIC DNA]</scope>
    <source>
        <strain>ATCC 700930 / 2457T / Serotype 2a</strain>
    </source>
</reference>
<organism>
    <name type="scientific">Shigella flexneri</name>
    <dbReference type="NCBI Taxonomy" id="623"/>
    <lineage>
        <taxon>Bacteria</taxon>
        <taxon>Pseudomonadati</taxon>
        <taxon>Pseudomonadota</taxon>
        <taxon>Gammaproteobacteria</taxon>
        <taxon>Enterobacterales</taxon>
        <taxon>Enterobacteriaceae</taxon>
        <taxon>Shigella</taxon>
    </lineage>
</organism>
<proteinExistence type="inferred from homology"/>
<accession>P0A8Y4</accession>
<accession>P32145</accession>
<sequence>MLYIFDLGNVIVDIDFNRVLGAWSDLTRIPLASLKKSFHMGEAFHQHERGEISDEAFAEALCHEMALPLSYEQFSHGWQAVFVALRPEVIAIMHKLREQGHRVVVLSNTNRLHTTFWPEEYPEIRDAADHIYLSQDLGMRKPEARIYQHVLQAEGFSPSDTVFFDDNADNIEGANQLGITSILVKDKTTIPDYFAKVLC</sequence>
<gene>
    <name type="primary">yihX</name>
    <name type="ordered locus">SF3957</name>
    <name type="ordered locus">S3789</name>
</gene>
<dbReference type="EC" id="3.1.3.10"/>
<dbReference type="EMBL" id="AE005674">
    <property type="protein sequence ID" value="AAN45392.2"/>
    <property type="molecule type" value="Genomic_DNA"/>
</dbReference>
<dbReference type="EMBL" id="AE014073">
    <property type="protein sequence ID" value="AAP18808.1"/>
    <property type="molecule type" value="Genomic_DNA"/>
</dbReference>
<dbReference type="RefSeq" id="NP_709685.2">
    <property type="nucleotide sequence ID" value="NC_004337.2"/>
</dbReference>
<dbReference type="RefSeq" id="WP_001295269.1">
    <property type="nucleotide sequence ID" value="NZ_WPGW01000092.1"/>
</dbReference>
<dbReference type="SMR" id="P0A8Y4"/>
<dbReference type="STRING" id="198214.SF3957"/>
<dbReference type="PaxDb" id="198214-SF3957"/>
<dbReference type="GeneID" id="1025513"/>
<dbReference type="GeneID" id="93778053"/>
<dbReference type="KEGG" id="sfl:SF3957"/>
<dbReference type="KEGG" id="sfx:S3789"/>
<dbReference type="PATRIC" id="fig|198214.7.peg.4662"/>
<dbReference type="HOGENOM" id="CLU_045011_9_5_6"/>
<dbReference type="Proteomes" id="UP000001006">
    <property type="component" value="Chromosome"/>
</dbReference>
<dbReference type="Proteomes" id="UP000002673">
    <property type="component" value="Chromosome"/>
</dbReference>
<dbReference type="GO" id="GO:0008877">
    <property type="term" value="F:glucose-1-phosphatase activity"/>
    <property type="evidence" value="ECO:0000250"/>
    <property type="project" value="UniProtKB"/>
</dbReference>
<dbReference type="GO" id="GO:0000287">
    <property type="term" value="F:magnesium ion binding"/>
    <property type="evidence" value="ECO:0000250"/>
    <property type="project" value="UniProtKB"/>
</dbReference>
<dbReference type="GO" id="GO:0030145">
    <property type="term" value="F:manganese ion binding"/>
    <property type="evidence" value="ECO:0000250"/>
    <property type="project" value="UniProtKB"/>
</dbReference>
<dbReference type="CDD" id="cd02603">
    <property type="entry name" value="HAD_sEH-N_like"/>
    <property type="match status" value="1"/>
</dbReference>
<dbReference type="FunFam" id="1.10.150.240:FF:000009">
    <property type="entry name" value="Alpha-D-glucose-1-phosphate phosphatase YihX"/>
    <property type="match status" value="1"/>
</dbReference>
<dbReference type="Gene3D" id="3.40.50.1000">
    <property type="entry name" value="HAD superfamily/HAD-like"/>
    <property type="match status" value="1"/>
</dbReference>
<dbReference type="Gene3D" id="1.10.150.240">
    <property type="entry name" value="Putative phosphatase, domain 2"/>
    <property type="match status" value="1"/>
</dbReference>
<dbReference type="InterPro" id="IPR036412">
    <property type="entry name" value="HAD-like_sf"/>
</dbReference>
<dbReference type="InterPro" id="IPR006439">
    <property type="entry name" value="HAD-SF_hydro_IA"/>
</dbReference>
<dbReference type="InterPro" id="IPR023214">
    <property type="entry name" value="HAD_sf"/>
</dbReference>
<dbReference type="InterPro" id="IPR023198">
    <property type="entry name" value="PGP-like_dom2"/>
</dbReference>
<dbReference type="NCBIfam" id="TIGR01509">
    <property type="entry name" value="HAD-SF-IA-v3"/>
    <property type="match status" value="1"/>
</dbReference>
<dbReference type="NCBIfam" id="NF006991">
    <property type="entry name" value="PRK09456.1"/>
    <property type="match status" value="1"/>
</dbReference>
<dbReference type="PANTHER" id="PTHR43611">
    <property type="entry name" value="ALPHA-D-GLUCOSE 1-PHOSPHATE PHOSPHATASE"/>
    <property type="match status" value="1"/>
</dbReference>
<dbReference type="PANTHER" id="PTHR43611:SF3">
    <property type="entry name" value="FLAVIN MONONUCLEOTIDE HYDROLASE 1, CHLOROPLATIC"/>
    <property type="match status" value="1"/>
</dbReference>
<dbReference type="Pfam" id="PF00702">
    <property type="entry name" value="Hydrolase"/>
    <property type="match status" value="1"/>
</dbReference>
<dbReference type="PRINTS" id="PR00413">
    <property type="entry name" value="HADHALOGNASE"/>
</dbReference>
<dbReference type="SFLD" id="SFLDG01130">
    <property type="entry name" value="C1.5.1:_Epoxide_Hydrolase_Phos"/>
    <property type="match status" value="1"/>
</dbReference>
<dbReference type="SFLD" id="SFLDS00003">
    <property type="entry name" value="Haloacid_Dehalogenase"/>
    <property type="match status" value="1"/>
</dbReference>
<dbReference type="SUPFAM" id="SSF56784">
    <property type="entry name" value="HAD-like"/>
    <property type="match status" value="1"/>
</dbReference>
<keyword id="KW-0378">Hydrolase</keyword>
<keyword id="KW-0460">Magnesium</keyword>
<keyword id="KW-0464">Manganese</keyword>
<keyword id="KW-0479">Metal-binding</keyword>
<keyword id="KW-1185">Reference proteome</keyword>
<evidence type="ECO:0000250" key="1"/>
<evidence type="ECO:0000250" key="2">
    <source>
        <dbReference type="UniProtKB" id="P0A8Y3"/>
    </source>
</evidence>
<evidence type="ECO:0000255" key="3"/>
<evidence type="ECO:0000305" key="4"/>
<protein>
    <recommendedName>
        <fullName>Alpha-D-glucose-1-phosphate phosphatase YihX</fullName>
        <shortName>Alpha-D-glucose-1-P phosphatase</shortName>
        <ecNumber>3.1.3.10</ecNumber>
    </recommendedName>
    <alternativeName>
        <fullName>Alpha-D-glucose-1-phosphatase</fullName>
    </alternativeName>
</protein>
<name>YIHX_SHIFL</name>
<comment type="function">
    <text evidence="2">Catalyzes the dephosphorylation of alpha-D-glucose 1-phosphate (Glc1P) and, to a lesser extent, of other sugar phosphates.</text>
</comment>
<comment type="catalytic activity">
    <reaction evidence="2">
        <text>alpha-D-glucose 1-phosphate + H2O = D-glucose + phosphate</text>
        <dbReference type="Rhea" id="RHEA:19933"/>
        <dbReference type="ChEBI" id="CHEBI:4167"/>
        <dbReference type="ChEBI" id="CHEBI:15377"/>
        <dbReference type="ChEBI" id="CHEBI:43474"/>
        <dbReference type="ChEBI" id="CHEBI:58601"/>
        <dbReference type="EC" id="3.1.3.10"/>
    </reaction>
</comment>
<comment type="cofactor">
    <cofactor evidence="2">
        <name>Mg(2+)</name>
        <dbReference type="ChEBI" id="CHEBI:18420"/>
    </cofactor>
    <cofactor evidence="2">
        <name>Mn(2+)</name>
        <dbReference type="ChEBI" id="CHEBI:29035"/>
    </cofactor>
    <cofactor evidence="2">
        <name>Co(2+)</name>
        <dbReference type="ChEBI" id="CHEBI:48828"/>
    </cofactor>
    <cofactor evidence="2">
        <name>Zn(2+)</name>
        <dbReference type="ChEBI" id="CHEBI:29105"/>
    </cofactor>
    <text evidence="2">Magnesium. Can also use other divalent metal cations such as manganese, cobalt or zinc.</text>
</comment>
<comment type="similarity">
    <text evidence="4">Belongs to the HAD-like hydrolase superfamily. YihX family.</text>
</comment>